<dbReference type="EC" id="2.7.7.4" evidence="2"/>
<dbReference type="EMBL" id="AE016825">
    <property type="protein sequence ID" value="AAQ59979.1"/>
    <property type="molecule type" value="Genomic_DNA"/>
</dbReference>
<dbReference type="RefSeq" id="WP_011135854.1">
    <property type="nucleotide sequence ID" value="NC_005085.1"/>
</dbReference>
<dbReference type="SMR" id="Q7NVN5"/>
<dbReference type="STRING" id="243365.CV_2307"/>
<dbReference type="KEGG" id="cvi:CV_2307"/>
<dbReference type="eggNOG" id="COG2895">
    <property type="taxonomic scope" value="Bacteria"/>
</dbReference>
<dbReference type="HOGENOM" id="CLU_007265_5_2_4"/>
<dbReference type="OrthoDB" id="9804504at2"/>
<dbReference type="UniPathway" id="UPA00140">
    <property type="reaction ID" value="UER00204"/>
</dbReference>
<dbReference type="Proteomes" id="UP000001424">
    <property type="component" value="Chromosome"/>
</dbReference>
<dbReference type="GO" id="GO:0005524">
    <property type="term" value="F:ATP binding"/>
    <property type="evidence" value="ECO:0007669"/>
    <property type="project" value="UniProtKB-KW"/>
</dbReference>
<dbReference type="GO" id="GO:0005525">
    <property type="term" value="F:GTP binding"/>
    <property type="evidence" value="ECO:0007669"/>
    <property type="project" value="UniProtKB-UniRule"/>
</dbReference>
<dbReference type="GO" id="GO:0003924">
    <property type="term" value="F:GTPase activity"/>
    <property type="evidence" value="ECO:0007669"/>
    <property type="project" value="InterPro"/>
</dbReference>
<dbReference type="GO" id="GO:0004781">
    <property type="term" value="F:sulfate adenylyltransferase (ATP) activity"/>
    <property type="evidence" value="ECO:0007669"/>
    <property type="project" value="UniProtKB-UniRule"/>
</dbReference>
<dbReference type="GO" id="GO:0070814">
    <property type="term" value="P:hydrogen sulfide biosynthetic process"/>
    <property type="evidence" value="ECO:0007669"/>
    <property type="project" value="UniProtKB-UniRule"/>
</dbReference>
<dbReference type="GO" id="GO:0000103">
    <property type="term" value="P:sulfate assimilation"/>
    <property type="evidence" value="ECO:0007669"/>
    <property type="project" value="UniProtKB-UniRule"/>
</dbReference>
<dbReference type="CDD" id="cd04166">
    <property type="entry name" value="CysN_ATPS"/>
    <property type="match status" value="1"/>
</dbReference>
<dbReference type="CDD" id="cd03695">
    <property type="entry name" value="CysN_NodQ_II"/>
    <property type="match status" value="1"/>
</dbReference>
<dbReference type="CDD" id="cd04095">
    <property type="entry name" value="CysN_NoDQ_III"/>
    <property type="match status" value="1"/>
</dbReference>
<dbReference type="FunFam" id="2.40.30.10:FF:000027">
    <property type="entry name" value="Sulfate adenylyltransferase subunit 1"/>
    <property type="match status" value="1"/>
</dbReference>
<dbReference type="FunFam" id="3.40.50.300:FF:000119">
    <property type="entry name" value="Sulfate adenylyltransferase subunit 1"/>
    <property type="match status" value="1"/>
</dbReference>
<dbReference type="Gene3D" id="3.40.50.300">
    <property type="entry name" value="P-loop containing nucleotide triphosphate hydrolases"/>
    <property type="match status" value="1"/>
</dbReference>
<dbReference type="Gene3D" id="2.40.30.10">
    <property type="entry name" value="Translation factors"/>
    <property type="match status" value="2"/>
</dbReference>
<dbReference type="HAMAP" id="MF_00062">
    <property type="entry name" value="Sulf_adenylyltr_sub1"/>
    <property type="match status" value="1"/>
</dbReference>
<dbReference type="InterPro" id="IPR041757">
    <property type="entry name" value="CysN_GTP-bd"/>
</dbReference>
<dbReference type="InterPro" id="IPR044138">
    <property type="entry name" value="CysN_II"/>
</dbReference>
<dbReference type="InterPro" id="IPR044139">
    <property type="entry name" value="CysN_NoDQ_III"/>
</dbReference>
<dbReference type="InterPro" id="IPR031157">
    <property type="entry name" value="G_TR_CS"/>
</dbReference>
<dbReference type="InterPro" id="IPR054696">
    <property type="entry name" value="GTP-eEF1A_C"/>
</dbReference>
<dbReference type="InterPro" id="IPR027417">
    <property type="entry name" value="P-loop_NTPase"/>
</dbReference>
<dbReference type="InterPro" id="IPR011779">
    <property type="entry name" value="SO4_adenylTrfase_lsu"/>
</dbReference>
<dbReference type="InterPro" id="IPR000795">
    <property type="entry name" value="T_Tr_GTP-bd_dom"/>
</dbReference>
<dbReference type="InterPro" id="IPR050100">
    <property type="entry name" value="TRAFAC_GTPase_members"/>
</dbReference>
<dbReference type="InterPro" id="IPR009000">
    <property type="entry name" value="Transl_B-barrel_sf"/>
</dbReference>
<dbReference type="InterPro" id="IPR009001">
    <property type="entry name" value="Transl_elong_EF1A/Init_IF2_C"/>
</dbReference>
<dbReference type="NCBIfam" id="TIGR02034">
    <property type="entry name" value="CysN"/>
    <property type="match status" value="1"/>
</dbReference>
<dbReference type="NCBIfam" id="NF003478">
    <property type="entry name" value="PRK05124.1"/>
    <property type="match status" value="1"/>
</dbReference>
<dbReference type="NCBIfam" id="NF004035">
    <property type="entry name" value="PRK05506.1"/>
    <property type="match status" value="1"/>
</dbReference>
<dbReference type="PANTHER" id="PTHR23115">
    <property type="entry name" value="TRANSLATION FACTOR"/>
    <property type="match status" value="1"/>
</dbReference>
<dbReference type="Pfam" id="PF22594">
    <property type="entry name" value="GTP-eEF1A_C"/>
    <property type="match status" value="1"/>
</dbReference>
<dbReference type="Pfam" id="PF00009">
    <property type="entry name" value="GTP_EFTU"/>
    <property type="match status" value="1"/>
</dbReference>
<dbReference type="PRINTS" id="PR00315">
    <property type="entry name" value="ELONGATNFCT"/>
</dbReference>
<dbReference type="SUPFAM" id="SSF50465">
    <property type="entry name" value="EF-Tu/eEF-1alpha/eIF2-gamma C-terminal domain"/>
    <property type="match status" value="1"/>
</dbReference>
<dbReference type="SUPFAM" id="SSF52540">
    <property type="entry name" value="P-loop containing nucleoside triphosphate hydrolases"/>
    <property type="match status" value="1"/>
</dbReference>
<dbReference type="SUPFAM" id="SSF50447">
    <property type="entry name" value="Translation proteins"/>
    <property type="match status" value="1"/>
</dbReference>
<dbReference type="PROSITE" id="PS00301">
    <property type="entry name" value="G_TR_1"/>
    <property type="match status" value="1"/>
</dbReference>
<dbReference type="PROSITE" id="PS51722">
    <property type="entry name" value="G_TR_2"/>
    <property type="match status" value="1"/>
</dbReference>
<proteinExistence type="inferred from homology"/>
<keyword id="KW-0067">ATP-binding</keyword>
<keyword id="KW-0342">GTP-binding</keyword>
<keyword id="KW-0547">Nucleotide-binding</keyword>
<keyword id="KW-0548">Nucleotidyltransferase</keyword>
<keyword id="KW-1185">Reference proteome</keyword>
<keyword id="KW-0808">Transferase</keyword>
<organism>
    <name type="scientific">Chromobacterium violaceum (strain ATCC 12472 / DSM 30191 / JCM 1249 / CCUG 213 / NBRC 12614 / NCIMB 9131 / NCTC 9757 / MK)</name>
    <dbReference type="NCBI Taxonomy" id="243365"/>
    <lineage>
        <taxon>Bacteria</taxon>
        <taxon>Pseudomonadati</taxon>
        <taxon>Pseudomonadota</taxon>
        <taxon>Betaproteobacteria</taxon>
        <taxon>Neisseriales</taxon>
        <taxon>Chromobacteriaceae</taxon>
        <taxon>Chromobacterium</taxon>
    </lineage>
</organism>
<gene>
    <name evidence="2" type="primary">cysN</name>
    <name type="ordered locus">CV_2307</name>
</gene>
<name>CYSN_CHRVO</name>
<feature type="chain" id="PRO_0000091521" description="Sulfate adenylyltransferase subunit 1">
    <location>
        <begin position="1"/>
        <end position="477"/>
    </location>
</feature>
<feature type="domain" description="tr-type G">
    <location>
        <begin position="22"/>
        <end position="239"/>
    </location>
</feature>
<feature type="region of interest" description="G1" evidence="1">
    <location>
        <begin position="31"/>
        <end position="38"/>
    </location>
</feature>
<feature type="region of interest" description="G2" evidence="1">
    <location>
        <begin position="89"/>
        <end position="93"/>
    </location>
</feature>
<feature type="region of interest" description="G3" evidence="1">
    <location>
        <begin position="110"/>
        <end position="113"/>
    </location>
</feature>
<feature type="region of interest" description="G4" evidence="1">
    <location>
        <begin position="165"/>
        <end position="168"/>
    </location>
</feature>
<feature type="region of interest" description="G5" evidence="1">
    <location>
        <begin position="202"/>
        <end position="204"/>
    </location>
</feature>
<feature type="binding site" evidence="2">
    <location>
        <begin position="31"/>
        <end position="38"/>
    </location>
    <ligand>
        <name>GTP</name>
        <dbReference type="ChEBI" id="CHEBI:37565"/>
    </ligand>
</feature>
<feature type="binding site" evidence="2">
    <location>
        <begin position="110"/>
        <end position="114"/>
    </location>
    <ligand>
        <name>GTP</name>
        <dbReference type="ChEBI" id="CHEBI:37565"/>
    </ligand>
</feature>
<feature type="binding site" evidence="2">
    <location>
        <begin position="165"/>
        <end position="168"/>
    </location>
    <ligand>
        <name>GTP</name>
        <dbReference type="ChEBI" id="CHEBI:37565"/>
    </ligand>
</feature>
<comment type="function">
    <text evidence="2">With CysD forms the ATP sulfurylase (ATPS) that catalyzes the adenylation of sulfate producing adenosine 5'-phosphosulfate (APS) and diphosphate, the first enzymatic step in sulfur assimilation pathway. APS synthesis involves the formation of a high-energy phosphoric-sulfuric acid anhydride bond driven by GTP hydrolysis by CysN coupled to ATP hydrolysis by CysD.</text>
</comment>
<comment type="catalytic activity">
    <reaction evidence="2">
        <text>sulfate + ATP + H(+) = adenosine 5'-phosphosulfate + diphosphate</text>
        <dbReference type="Rhea" id="RHEA:18133"/>
        <dbReference type="ChEBI" id="CHEBI:15378"/>
        <dbReference type="ChEBI" id="CHEBI:16189"/>
        <dbReference type="ChEBI" id="CHEBI:30616"/>
        <dbReference type="ChEBI" id="CHEBI:33019"/>
        <dbReference type="ChEBI" id="CHEBI:58243"/>
        <dbReference type="EC" id="2.7.7.4"/>
    </reaction>
</comment>
<comment type="pathway">
    <text evidence="2">Sulfur metabolism; hydrogen sulfide biosynthesis; sulfite from sulfate: step 1/3.</text>
</comment>
<comment type="subunit">
    <text evidence="2">Heterodimer composed of CysD, the smaller subunit, and CysN.</text>
</comment>
<comment type="similarity">
    <text evidence="2">Belongs to the TRAFAC class translation factor GTPase superfamily. Classic translation factor GTPase family. CysN/NodQ subfamily.</text>
</comment>
<protein>
    <recommendedName>
        <fullName evidence="2">Sulfate adenylyltransferase subunit 1</fullName>
        <ecNumber evidence="2">2.7.7.4</ecNumber>
    </recommendedName>
    <alternativeName>
        <fullName evidence="2">ATP-sulfurylase large subunit</fullName>
    </alternativeName>
    <alternativeName>
        <fullName evidence="2">Sulfate adenylate transferase</fullName>
        <shortName evidence="2">SAT</shortName>
    </alternativeName>
</protein>
<sequence>MSHQSELIAGDILEYLSQHENKDMLRFITCGSVDDGKSTLIGRLLHDSKLIFEDQLAAIERDSKKYNTTDQDIDLALLVDGLQAEREQGITIDVAYRYFSTDKRKFIIADCPGHEQYTRNMATGASTSNLAIILIDARRGVQTQTRRHSYIVSLLGIRHVIVAVNKMDLVDYSEDVYNRIRDEYLTFAEHLDIPDIHFVPISALRGDNVVSRTEAAPWYQGATLMHLLETVQISHDAPLSAFRLPVQYVNRPNLDFRGFCGTIASGAVHPGDAVVALPSGKESRVKEIVTFDGSLSRAGAGQAVTLTLEDEIDISRGDMLVRADEARPHVSRSFDAHLVAMGEAPLRPGKEYGFKLAGKYVTGRIEAILHRTDVNTLQDSPADALALNEIGLCRISLNSPAAFDAYRDCRGSGSLILIDRLSNGTVAAGMIVAQSEEASPAALSPWALFEQELDQLLQRYFPQMTRAELARRLRDEL</sequence>
<reference key="1">
    <citation type="journal article" date="2003" name="Proc. Natl. Acad. Sci. U.S.A.">
        <title>The complete genome sequence of Chromobacterium violaceum reveals remarkable and exploitable bacterial adaptability.</title>
        <authorList>
            <person name="Vasconcelos A.T.R."/>
            <person name="de Almeida D.F."/>
            <person name="Hungria M."/>
            <person name="Guimaraes C.T."/>
            <person name="Antonio R.V."/>
            <person name="Almeida F.C."/>
            <person name="de Almeida L.G.P."/>
            <person name="de Almeida R."/>
            <person name="Alves-Gomes J.A."/>
            <person name="Andrade E.M."/>
            <person name="Araripe J."/>
            <person name="de Araujo M.F.F."/>
            <person name="Astolfi-Filho S."/>
            <person name="Azevedo V."/>
            <person name="Baptista A.J."/>
            <person name="Bataus L.A.M."/>
            <person name="Batista J.S."/>
            <person name="Belo A."/>
            <person name="van den Berg C."/>
            <person name="Bogo M."/>
            <person name="Bonatto S."/>
            <person name="Bordignon J."/>
            <person name="Brigido M.M."/>
            <person name="Brito C.A."/>
            <person name="Brocchi M."/>
            <person name="Burity H.A."/>
            <person name="Camargo A.A."/>
            <person name="Cardoso D.D.P."/>
            <person name="Carneiro N.P."/>
            <person name="Carraro D.M."/>
            <person name="Carvalho C.M.B."/>
            <person name="Cascardo J.C.M."/>
            <person name="Cavada B.S."/>
            <person name="Chueire L.M.O."/>
            <person name="Creczynski-Pasa T.B."/>
            <person name="Cunha-Junior N.C."/>
            <person name="Fagundes N."/>
            <person name="Falcao C.L."/>
            <person name="Fantinatti F."/>
            <person name="Farias I.P."/>
            <person name="Felipe M.S.S."/>
            <person name="Ferrari L.P."/>
            <person name="Ferro J.A."/>
            <person name="Ferro M.I.T."/>
            <person name="Franco G.R."/>
            <person name="Freitas N.S.A."/>
            <person name="Furlan L.R."/>
            <person name="Gazzinelli R.T."/>
            <person name="Gomes E.A."/>
            <person name="Goncalves P.R."/>
            <person name="Grangeiro T.B."/>
            <person name="Grattapaglia D."/>
            <person name="Grisard E.C."/>
            <person name="Hanna E.S."/>
            <person name="Jardim S.N."/>
            <person name="Laurino J."/>
            <person name="Leoi L.C.T."/>
            <person name="Lima L.F.A."/>
            <person name="Loureiro M.F."/>
            <person name="Lyra M.C.C.P."/>
            <person name="Madeira H.M.F."/>
            <person name="Manfio G.P."/>
            <person name="Maranhao A.Q."/>
            <person name="Martins W.S."/>
            <person name="di Mauro S.M.Z."/>
            <person name="de Medeiros S.R.B."/>
            <person name="Meissner R.V."/>
            <person name="Moreira M.A.M."/>
            <person name="Nascimento F.F."/>
            <person name="Nicolas M.F."/>
            <person name="Oliveira J.G."/>
            <person name="Oliveira S.C."/>
            <person name="Paixao R.F.C."/>
            <person name="Parente J.A."/>
            <person name="Pedrosa F.O."/>
            <person name="Pena S.D.J."/>
            <person name="Pereira J.O."/>
            <person name="Pereira M."/>
            <person name="Pinto L.S.R.C."/>
            <person name="Pinto L.S."/>
            <person name="Porto J.I.R."/>
            <person name="Potrich D.P."/>
            <person name="Ramalho-Neto C.E."/>
            <person name="Reis A.M.M."/>
            <person name="Rigo L.U."/>
            <person name="Rondinelli E."/>
            <person name="Santos E.B.P."/>
            <person name="Santos F.R."/>
            <person name="Schneider M.P.C."/>
            <person name="Seuanez H.N."/>
            <person name="Silva A.M.R."/>
            <person name="da Silva A.L.C."/>
            <person name="Silva D.W."/>
            <person name="Silva R."/>
            <person name="Simoes I.C."/>
            <person name="Simon D."/>
            <person name="Soares C.M.A."/>
            <person name="Soares R.B.A."/>
            <person name="Souza E.M."/>
            <person name="Souza K.R.L."/>
            <person name="Souza R.C."/>
            <person name="Steffens M.B.R."/>
            <person name="Steindel M."/>
            <person name="Teixeira S.R."/>
            <person name="Urmenyi T."/>
            <person name="Vettore A."/>
            <person name="Wassem R."/>
            <person name="Zaha A."/>
            <person name="Simpson A.J.G."/>
        </authorList>
    </citation>
    <scope>NUCLEOTIDE SEQUENCE [LARGE SCALE GENOMIC DNA]</scope>
    <source>
        <strain>ATCC 12472 / DSM 30191 / JCM 1249 / CCUG 213 / NBRC 12614 / NCIMB 9131 / NCTC 9757 / MK</strain>
    </source>
</reference>
<accession>Q7NVN5</accession>
<evidence type="ECO:0000250" key="1"/>
<evidence type="ECO:0000255" key="2">
    <source>
        <dbReference type="HAMAP-Rule" id="MF_00062"/>
    </source>
</evidence>